<comment type="catalytic activity">
    <reaction>
        <text>L-seryl-[protein] + ATP = O-phospho-L-seryl-[protein] + ADP + H(+)</text>
        <dbReference type="Rhea" id="RHEA:17989"/>
        <dbReference type="Rhea" id="RHEA-COMP:9863"/>
        <dbReference type="Rhea" id="RHEA-COMP:11604"/>
        <dbReference type="ChEBI" id="CHEBI:15378"/>
        <dbReference type="ChEBI" id="CHEBI:29999"/>
        <dbReference type="ChEBI" id="CHEBI:30616"/>
        <dbReference type="ChEBI" id="CHEBI:83421"/>
        <dbReference type="ChEBI" id="CHEBI:456216"/>
        <dbReference type="EC" id="2.7.11.1"/>
    </reaction>
</comment>
<comment type="catalytic activity">
    <reaction>
        <text>L-threonyl-[protein] + ATP = O-phospho-L-threonyl-[protein] + ADP + H(+)</text>
        <dbReference type="Rhea" id="RHEA:46608"/>
        <dbReference type="Rhea" id="RHEA-COMP:11060"/>
        <dbReference type="Rhea" id="RHEA-COMP:11605"/>
        <dbReference type="ChEBI" id="CHEBI:15378"/>
        <dbReference type="ChEBI" id="CHEBI:30013"/>
        <dbReference type="ChEBI" id="CHEBI:30616"/>
        <dbReference type="ChEBI" id="CHEBI:61977"/>
        <dbReference type="ChEBI" id="CHEBI:456216"/>
        <dbReference type="EC" id="2.7.11.1"/>
    </reaction>
</comment>
<comment type="similarity">
    <text evidence="3">Belongs to the protein kinase superfamily. TKL Ser/Thr protein kinase family.</text>
</comment>
<reference key="1">
    <citation type="journal article" date="2005" name="Science">
        <title>The transcriptional landscape of the mammalian genome.</title>
        <authorList>
            <person name="Carninci P."/>
            <person name="Kasukawa T."/>
            <person name="Katayama S."/>
            <person name="Gough J."/>
            <person name="Frith M.C."/>
            <person name="Maeda N."/>
            <person name="Oyama R."/>
            <person name="Ravasi T."/>
            <person name="Lenhard B."/>
            <person name="Wells C."/>
            <person name="Kodzius R."/>
            <person name="Shimokawa K."/>
            <person name="Bajic V.B."/>
            <person name="Brenner S.E."/>
            <person name="Batalov S."/>
            <person name="Forrest A.R."/>
            <person name="Zavolan M."/>
            <person name="Davis M.J."/>
            <person name="Wilming L.G."/>
            <person name="Aidinis V."/>
            <person name="Allen J.E."/>
            <person name="Ambesi-Impiombato A."/>
            <person name="Apweiler R."/>
            <person name="Aturaliya R.N."/>
            <person name="Bailey T.L."/>
            <person name="Bansal M."/>
            <person name="Baxter L."/>
            <person name="Beisel K.W."/>
            <person name="Bersano T."/>
            <person name="Bono H."/>
            <person name="Chalk A.M."/>
            <person name="Chiu K.P."/>
            <person name="Choudhary V."/>
            <person name="Christoffels A."/>
            <person name="Clutterbuck D.R."/>
            <person name="Crowe M.L."/>
            <person name="Dalla E."/>
            <person name="Dalrymple B.P."/>
            <person name="de Bono B."/>
            <person name="Della Gatta G."/>
            <person name="di Bernardo D."/>
            <person name="Down T."/>
            <person name="Engstrom P."/>
            <person name="Fagiolini M."/>
            <person name="Faulkner G."/>
            <person name="Fletcher C.F."/>
            <person name="Fukushima T."/>
            <person name="Furuno M."/>
            <person name="Futaki S."/>
            <person name="Gariboldi M."/>
            <person name="Georgii-Hemming P."/>
            <person name="Gingeras T.R."/>
            <person name="Gojobori T."/>
            <person name="Green R.E."/>
            <person name="Gustincich S."/>
            <person name="Harbers M."/>
            <person name="Hayashi Y."/>
            <person name="Hensch T.K."/>
            <person name="Hirokawa N."/>
            <person name="Hill D."/>
            <person name="Huminiecki L."/>
            <person name="Iacono M."/>
            <person name="Ikeo K."/>
            <person name="Iwama A."/>
            <person name="Ishikawa T."/>
            <person name="Jakt M."/>
            <person name="Kanapin A."/>
            <person name="Katoh M."/>
            <person name="Kawasawa Y."/>
            <person name="Kelso J."/>
            <person name="Kitamura H."/>
            <person name="Kitano H."/>
            <person name="Kollias G."/>
            <person name="Krishnan S.P."/>
            <person name="Kruger A."/>
            <person name="Kummerfeld S.K."/>
            <person name="Kurochkin I.V."/>
            <person name="Lareau L.F."/>
            <person name="Lazarevic D."/>
            <person name="Lipovich L."/>
            <person name="Liu J."/>
            <person name="Liuni S."/>
            <person name="McWilliam S."/>
            <person name="Madan Babu M."/>
            <person name="Madera M."/>
            <person name="Marchionni L."/>
            <person name="Matsuda H."/>
            <person name="Matsuzawa S."/>
            <person name="Miki H."/>
            <person name="Mignone F."/>
            <person name="Miyake S."/>
            <person name="Morris K."/>
            <person name="Mottagui-Tabar S."/>
            <person name="Mulder N."/>
            <person name="Nakano N."/>
            <person name="Nakauchi H."/>
            <person name="Ng P."/>
            <person name="Nilsson R."/>
            <person name="Nishiguchi S."/>
            <person name="Nishikawa S."/>
            <person name="Nori F."/>
            <person name="Ohara O."/>
            <person name="Okazaki Y."/>
            <person name="Orlando V."/>
            <person name="Pang K.C."/>
            <person name="Pavan W.J."/>
            <person name="Pavesi G."/>
            <person name="Pesole G."/>
            <person name="Petrovsky N."/>
            <person name="Piazza S."/>
            <person name="Reed J."/>
            <person name="Reid J.F."/>
            <person name="Ring B.Z."/>
            <person name="Ringwald M."/>
            <person name="Rost B."/>
            <person name="Ruan Y."/>
            <person name="Salzberg S.L."/>
            <person name="Sandelin A."/>
            <person name="Schneider C."/>
            <person name="Schoenbach C."/>
            <person name="Sekiguchi K."/>
            <person name="Semple C.A."/>
            <person name="Seno S."/>
            <person name="Sessa L."/>
            <person name="Sheng Y."/>
            <person name="Shibata Y."/>
            <person name="Shimada H."/>
            <person name="Shimada K."/>
            <person name="Silva D."/>
            <person name="Sinclair B."/>
            <person name="Sperling S."/>
            <person name="Stupka E."/>
            <person name="Sugiura K."/>
            <person name="Sultana R."/>
            <person name="Takenaka Y."/>
            <person name="Taki K."/>
            <person name="Tammoja K."/>
            <person name="Tan S.L."/>
            <person name="Tang S."/>
            <person name="Taylor M.S."/>
            <person name="Tegner J."/>
            <person name="Teichmann S.A."/>
            <person name="Ueda H.R."/>
            <person name="van Nimwegen E."/>
            <person name="Verardo R."/>
            <person name="Wei C.L."/>
            <person name="Yagi K."/>
            <person name="Yamanishi H."/>
            <person name="Zabarovsky E."/>
            <person name="Zhu S."/>
            <person name="Zimmer A."/>
            <person name="Hide W."/>
            <person name="Bult C."/>
            <person name="Grimmond S.M."/>
            <person name="Teasdale R.D."/>
            <person name="Liu E.T."/>
            <person name="Brusic V."/>
            <person name="Quackenbush J."/>
            <person name="Wahlestedt C."/>
            <person name="Mattick J.S."/>
            <person name="Hume D.A."/>
            <person name="Kai C."/>
            <person name="Sasaki D."/>
            <person name="Tomaru Y."/>
            <person name="Fukuda S."/>
            <person name="Kanamori-Katayama M."/>
            <person name="Suzuki M."/>
            <person name="Aoki J."/>
            <person name="Arakawa T."/>
            <person name="Iida J."/>
            <person name="Imamura K."/>
            <person name="Itoh M."/>
            <person name="Kato T."/>
            <person name="Kawaji H."/>
            <person name="Kawagashira N."/>
            <person name="Kawashima T."/>
            <person name="Kojima M."/>
            <person name="Kondo S."/>
            <person name="Konno H."/>
            <person name="Nakano K."/>
            <person name="Ninomiya N."/>
            <person name="Nishio T."/>
            <person name="Okada M."/>
            <person name="Plessy C."/>
            <person name="Shibata K."/>
            <person name="Shiraki T."/>
            <person name="Suzuki S."/>
            <person name="Tagami M."/>
            <person name="Waki K."/>
            <person name="Watahiki A."/>
            <person name="Okamura-Oho Y."/>
            <person name="Suzuki H."/>
            <person name="Kawai J."/>
            <person name="Hayashizaki Y."/>
        </authorList>
    </citation>
    <scope>NUCLEOTIDE SEQUENCE [LARGE SCALE MRNA]</scope>
    <source>
        <strain>C57BL/6J</strain>
        <tissue>Vagina</tissue>
    </source>
</reference>
<accession>Q8BZ25</accession>
<gene>
    <name type="primary">Ankk1</name>
</gene>
<organism>
    <name type="scientific">Mus musculus</name>
    <name type="common">Mouse</name>
    <dbReference type="NCBI Taxonomy" id="10090"/>
    <lineage>
        <taxon>Eukaryota</taxon>
        <taxon>Metazoa</taxon>
        <taxon>Chordata</taxon>
        <taxon>Craniata</taxon>
        <taxon>Vertebrata</taxon>
        <taxon>Euteleostomi</taxon>
        <taxon>Mammalia</taxon>
        <taxon>Eutheria</taxon>
        <taxon>Euarchontoglires</taxon>
        <taxon>Glires</taxon>
        <taxon>Rodentia</taxon>
        <taxon>Myomorpha</taxon>
        <taxon>Muroidea</taxon>
        <taxon>Muridae</taxon>
        <taxon>Murinae</taxon>
        <taxon>Mus</taxon>
        <taxon>Mus</taxon>
    </lineage>
</organism>
<protein>
    <recommendedName>
        <fullName>Ankyrin repeat and protein kinase domain-containing protein 1</fullName>
        <ecNumber>2.7.11.1</ecNumber>
    </recommendedName>
</protein>
<feature type="chain" id="PRO_0000085621" description="Ankyrin repeat and protein kinase domain-containing protein 1">
    <location>
        <begin position="1"/>
        <end position="745"/>
    </location>
</feature>
<feature type="domain" description="Protein kinase" evidence="1">
    <location>
        <begin position="34"/>
        <end position="301"/>
    </location>
</feature>
<feature type="repeat" description="ANK 1">
    <location>
        <begin position="369"/>
        <end position="398"/>
    </location>
</feature>
<feature type="repeat" description="ANK 2">
    <location>
        <begin position="402"/>
        <end position="431"/>
    </location>
</feature>
<feature type="repeat" description="ANK 3">
    <location>
        <begin position="435"/>
        <end position="464"/>
    </location>
</feature>
<feature type="repeat" description="ANK 4">
    <location>
        <begin position="468"/>
        <end position="497"/>
    </location>
</feature>
<feature type="repeat" description="ANK 5">
    <location>
        <begin position="501"/>
        <end position="530"/>
    </location>
</feature>
<feature type="repeat" description="ANK 6">
    <location>
        <begin position="534"/>
        <end position="563"/>
    </location>
</feature>
<feature type="repeat" description="ANK 7">
    <location>
        <begin position="567"/>
        <end position="596"/>
    </location>
</feature>
<feature type="repeat" description="ANK 8">
    <location>
        <begin position="600"/>
        <end position="629"/>
    </location>
</feature>
<feature type="repeat" description="ANK 9">
    <location>
        <begin position="633"/>
        <end position="662"/>
    </location>
</feature>
<feature type="repeat" description="ANK 10">
    <location>
        <begin position="666"/>
        <end position="695"/>
    </location>
</feature>
<feature type="repeat" description="ANK 11">
    <location>
        <begin position="699"/>
        <end position="728"/>
    </location>
</feature>
<feature type="active site" description="Proton acceptor" evidence="1 2">
    <location>
        <position position="157"/>
    </location>
</feature>
<feature type="binding site" evidence="1">
    <location>
        <begin position="40"/>
        <end position="48"/>
    </location>
    <ligand>
        <name>ATP</name>
        <dbReference type="ChEBI" id="CHEBI:30616"/>
    </ligand>
</feature>
<feature type="binding site" evidence="1">
    <location>
        <position position="63"/>
    </location>
    <ligand>
        <name>ATP</name>
        <dbReference type="ChEBI" id="CHEBI:30616"/>
    </ligand>
</feature>
<name>ANKK1_MOUSE</name>
<keyword id="KW-0040">ANK repeat</keyword>
<keyword id="KW-0067">ATP-binding</keyword>
<keyword id="KW-0418">Kinase</keyword>
<keyword id="KW-0547">Nucleotide-binding</keyword>
<keyword id="KW-1185">Reference proteome</keyword>
<keyword id="KW-0677">Repeat</keyword>
<keyword id="KW-0723">Serine/threonine-protein kinase</keyword>
<keyword id="KW-0808">Transferase</keyword>
<sequence length="745" mass="82480">MVPHRARRLLNPMAVGPLAQQLGSLTVFTRDDFEEEWHLVASGGFSKVFQARHKRWRTQYAIKCSPCLQKETTSSEVTCLFEEAVKMEKIKFQHIVSIYGVCKQPLGIVMEFMASGSLEKTLPTHSLCWPLKLRIIHETSLAMNFLHSIKPPLLHLDLKPGNILLDNNMHVKISDFGLSKWMEQSTQKQYIERSALRGTLSYIPPEMFLENNKAPGPEYDVYSFAIVIWEILTQKKPYAGLNMMTIIIRVAAGMRPSLQDVSDEWPEEVHQMVNLMKRCWDQDPKKRPCFLNVAVETDMLLSLFQSPMTDPGCEALTQKVSCKPSLSQPHKVSKEVNQEIADSVSSDSLKWILQLSDSKSLVASDVYENRVTPLHFLVAGGSLEQVRLLLSHDVDVDCQTASGYTPLLIATQDQQPDLCALLLAHGADTNLADEDGWAPLHFAAQNGDDHTARLLLDHGALVNAREHEGWTPLHLAAQNNFENVARLLVSRQADLSPHEAEGKTPLHVAAYFGHIGLVKLLSGQGAELDAQQRNLRTPLHLAVERGKVRAIQHLLKCGALPDALDHSGYSPLHIAAARGKDLIFKMLLRYGASLELRTQQGWTPLHLATYKGHLEIIHQLAKSHVDLDALGSMQWTPLHLAAFQGEEGVMLALLQCGANPNAAEQSGWTPLHLAVHKGTFLGITHLLEYGADIHACNKVGWTPAHLAALKGNTAILKVLVKAAAQVDVKGGVSCTPLQLAIHSPK</sequence>
<evidence type="ECO:0000255" key="1">
    <source>
        <dbReference type="PROSITE-ProRule" id="PRU00159"/>
    </source>
</evidence>
<evidence type="ECO:0000255" key="2">
    <source>
        <dbReference type="PROSITE-ProRule" id="PRU10027"/>
    </source>
</evidence>
<evidence type="ECO:0000305" key="3"/>
<dbReference type="EC" id="2.7.11.1"/>
<dbReference type="EMBL" id="AK036872">
    <property type="protein sequence ID" value="BAC29613.1"/>
    <property type="molecule type" value="mRNA"/>
</dbReference>
<dbReference type="CCDS" id="CCDS40616.1"/>
<dbReference type="RefSeq" id="NP_766510.1">
    <property type="nucleotide sequence ID" value="NM_172922.4"/>
</dbReference>
<dbReference type="SMR" id="Q8BZ25"/>
<dbReference type="FunCoup" id="Q8BZ25">
    <property type="interactions" value="232"/>
</dbReference>
<dbReference type="STRING" id="10090.ENSMUSP00000034792"/>
<dbReference type="GlyGen" id="Q8BZ25">
    <property type="glycosylation" value="4 sites, 1 O-linked glycan (3 sites)"/>
</dbReference>
<dbReference type="iPTMnet" id="Q8BZ25"/>
<dbReference type="PhosphoSitePlus" id="Q8BZ25"/>
<dbReference type="PaxDb" id="10090-ENSMUSP00000034792"/>
<dbReference type="Antibodypedia" id="2098">
    <property type="antibodies" value="109 antibodies from 28 providers"/>
</dbReference>
<dbReference type="DNASU" id="244859"/>
<dbReference type="Ensembl" id="ENSMUST00000034792.7">
    <property type="protein sequence ID" value="ENSMUSP00000034792.6"/>
    <property type="gene ID" value="ENSMUSG00000032257.7"/>
</dbReference>
<dbReference type="GeneID" id="244859"/>
<dbReference type="KEGG" id="mmu:244859"/>
<dbReference type="UCSC" id="uc009pjb.1">
    <property type="organism name" value="mouse"/>
</dbReference>
<dbReference type="AGR" id="MGI:3045301"/>
<dbReference type="CTD" id="255239"/>
<dbReference type="MGI" id="MGI:3045301">
    <property type="gene designation" value="Ankk1"/>
</dbReference>
<dbReference type="VEuPathDB" id="HostDB:ENSMUSG00000032257"/>
<dbReference type="eggNOG" id="KOG0192">
    <property type="taxonomic scope" value="Eukaryota"/>
</dbReference>
<dbReference type="GeneTree" id="ENSGT00940000162060"/>
<dbReference type="HOGENOM" id="CLU_015188_1_0_1"/>
<dbReference type="InParanoid" id="Q8BZ25"/>
<dbReference type="OMA" id="PTHQGWT"/>
<dbReference type="OrthoDB" id="195446at2759"/>
<dbReference type="PhylomeDB" id="Q8BZ25"/>
<dbReference type="TreeFam" id="TF106506"/>
<dbReference type="BioGRID-ORCS" id="244859">
    <property type="hits" value="0 hits in 81 CRISPR screens"/>
</dbReference>
<dbReference type="PRO" id="PR:Q8BZ25"/>
<dbReference type="Proteomes" id="UP000000589">
    <property type="component" value="Chromosome 9"/>
</dbReference>
<dbReference type="RNAct" id="Q8BZ25">
    <property type="molecule type" value="protein"/>
</dbReference>
<dbReference type="Bgee" id="ENSMUSG00000032257">
    <property type="expression patterns" value="Expressed in striatum and 8 other cell types or tissues"/>
</dbReference>
<dbReference type="ExpressionAtlas" id="Q8BZ25">
    <property type="expression patterns" value="baseline and differential"/>
</dbReference>
<dbReference type="GO" id="GO:0042995">
    <property type="term" value="C:cell projection"/>
    <property type="evidence" value="ECO:0000314"/>
    <property type="project" value="MGI"/>
</dbReference>
<dbReference type="GO" id="GO:0005737">
    <property type="term" value="C:cytoplasm"/>
    <property type="evidence" value="ECO:0000314"/>
    <property type="project" value="MGI"/>
</dbReference>
<dbReference type="GO" id="GO:0005634">
    <property type="term" value="C:nucleus"/>
    <property type="evidence" value="ECO:0000314"/>
    <property type="project" value="MGI"/>
</dbReference>
<dbReference type="GO" id="GO:0005524">
    <property type="term" value="F:ATP binding"/>
    <property type="evidence" value="ECO:0007669"/>
    <property type="project" value="UniProtKB-KW"/>
</dbReference>
<dbReference type="GO" id="GO:0106310">
    <property type="term" value="F:protein serine kinase activity"/>
    <property type="evidence" value="ECO:0007669"/>
    <property type="project" value="RHEA"/>
</dbReference>
<dbReference type="GO" id="GO:0004674">
    <property type="term" value="F:protein serine/threonine kinase activity"/>
    <property type="evidence" value="ECO:0007669"/>
    <property type="project" value="UniProtKB-KW"/>
</dbReference>
<dbReference type="GO" id="GO:0071300">
    <property type="term" value="P:cellular response to retinoic acid"/>
    <property type="evidence" value="ECO:0007669"/>
    <property type="project" value="Ensembl"/>
</dbReference>
<dbReference type="GO" id="GO:0010564">
    <property type="term" value="P:regulation of cell cycle process"/>
    <property type="evidence" value="ECO:0000314"/>
    <property type="project" value="MGI"/>
</dbReference>
<dbReference type="Gene3D" id="1.25.40.20">
    <property type="entry name" value="Ankyrin repeat-containing domain"/>
    <property type="match status" value="4"/>
</dbReference>
<dbReference type="Gene3D" id="1.10.510.10">
    <property type="entry name" value="Transferase(Phosphotransferase) domain 1"/>
    <property type="match status" value="1"/>
</dbReference>
<dbReference type="InterPro" id="IPR002110">
    <property type="entry name" value="Ankyrin_rpt"/>
</dbReference>
<dbReference type="InterPro" id="IPR036770">
    <property type="entry name" value="Ankyrin_rpt-contain_sf"/>
</dbReference>
<dbReference type="InterPro" id="IPR011009">
    <property type="entry name" value="Kinase-like_dom_sf"/>
</dbReference>
<dbReference type="InterPro" id="IPR000719">
    <property type="entry name" value="Prot_kinase_dom"/>
</dbReference>
<dbReference type="InterPro" id="IPR001245">
    <property type="entry name" value="Ser-Thr/Tyr_kinase_cat_dom"/>
</dbReference>
<dbReference type="InterPro" id="IPR008271">
    <property type="entry name" value="Ser/Thr_kinase_AS"/>
</dbReference>
<dbReference type="PANTHER" id="PTHR24198">
    <property type="entry name" value="ANKYRIN REPEAT AND PROTEIN KINASE DOMAIN-CONTAINING PROTEIN"/>
    <property type="match status" value="1"/>
</dbReference>
<dbReference type="PANTHER" id="PTHR24198:SF165">
    <property type="entry name" value="ANKYRIN REPEAT-CONTAINING PROTEIN-RELATED"/>
    <property type="match status" value="1"/>
</dbReference>
<dbReference type="Pfam" id="PF12796">
    <property type="entry name" value="Ank_2"/>
    <property type="match status" value="4"/>
</dbReference>
<dbReference type="Pfam" id="PF13637">
    <property type="entry name" value="Ank_4"/>
    <property type="match status" value="1"/>
</dbReference>
<dbReference type="Pfam" id="PF07714">
    <property type="entry name" value="PK_Tyr_Ser-Thr"/>
    <property type="match status" value="1"/>
</dbReference>
<dbReference type="PRINTS" id="PR01415">
    <property type="entry name" value="ANKYRIN"/>
</dbReference>
<dbReference type="SMART" id="SM00248">
    <property type="entry name" value="ANK"/>
    <property type="match status" value="11"/>
</dbReference>
<dbReference type="SMART" id="SM00220">
    <property type="entry name" value="S_TKc"/>
    <property type="match status" value="1"/>
</dbReference>
<dbReference type="SUPFAM" id="SSF48403">
    <property type="entry name" value="Ankyrin repeat"/>
    <property type="match status" value="1"/>
</dbReference>
<dbReference type="SUPFAM" id="SSF56112">
    <property type="entry name" value="Protein kinase-like (PK-like)"/>
    <property type="match status" value="1"/>
</dbReference>
<dbReference type="PROSITE" id="PS50297">
    <property type="entry name" value="ANK_REP_REGION"/>
    <property type="match status" value="1"/>
</dbReference>
<dbReference type="PROSITE" id="PS50088">
    <property type="entry name" value="ANK_REPEAT"/>
    <property type="match status" value="11"/>
</dbReference>
<dbReference type="PROSITE" id="PS50011">
    <property type="entry name" value="PROTEIN_KINASE_DOM"/>
    <property type="match status" value="1"/>
</dbReference>
<dbReference type="PROSITE" id="PS00108">
    <property type="entry name" value="PROTEIN_KINASE_ST"/>
    <property type="match status" value="1"/>
</dbReference>
<proteinExistence type="evidence at transcript level"/>